<comment type="function">
    <text evidence="2">Involved in the biosynthetic pathway of cholesterol.</text>
</comment>
<comment type="catalytic activity">
    <reaction evidence="3">
        <text>2 acetyl-CoA = acetoacetyl-CoA + CoA</text>
        <dbReference type="Rhea" id="RHEA:21036"/>
        <dbReference type="ChEBI" id="CHEBI:57286"/>
        <dbReference type="ChEBI" id="CHEBI:57287"/>
        <dbReference type="ChEBI" id="CHEBI:57288"/>
        <dbReference type="EC" id="2.3.1.9"/>
    </reaction>
    <physiologicalReaction direction="right-to-left" evidence="2">
        <dbReference type="Rhea" id="RHEA:21038"/>
    </physiologicalReaction>
</comment>
<comment type="pathway">
    <text evidence="2">Lipid metabolism; fatty acid metabolism.</text>
</comment>
<comment type="subunit">
    <text evidence="2">Homotetramer.</text>
</comment>
<comment type="subcellular location">
    <subcellularLocation>
        <location evidence="2">Cytoplasm</location>
        <location evidence="2">Cytosol</location>
    </subcellularLocation>
</comment>
<comment type="similarity">
    <text evidence="4">Belongs to the thiolase-like superfamily. Thiolase family.</text>
</comment>
<comment type="sequence caution" evidence="4">
    <conflict type="erroneous initiation">
        <sequence resource="EMBL-CDS" id="BAB28763"/>
    </conflict>
</comment>
<evidence type="ECO:0000250" key="1">
    <source>
        <dbReference type="UniProtKB" id="P42765"/>
    </source>
</evidence>
<evidence type="ECO:0000250" key="2">
    <source>
        <dbReference type="UniProtKB" id="Q9BWD1"/>
    </source>
</evidence>
<evidence type="ECO:0000255" key="3">
    <source>
        <dbReference type="PROSITE-ProRule" id="PRU10020"/>
    </source>
</evidence>
<evidence type="ECO:0000305" key="4"/>
<proteinExistence type="evidence at protein level"/>
<accession>Q8CAY6</accession>
<accession>Q3TJY7</accession>
<accession>Q62292</accession>
<accession>Q96EB7</accession>
<accession>Q99K88</accession>
<accession>Q9CYV2</accession>
<keyword id="KW-0007">Acetylation</keyword>
<keyword id="KW-0012">Acyltransferase</keyword>
<keyword id="KW-0963">Cytoplasm</keyword>
<keyword id="KW-0903">Direct protein sequencing</keyword>
<keyword id="KW-1185">Reference proteome</keyword>
<keyword id="KW-0808">Transferase</keyword>
<dbReference type="EC" id="2.3.1.9" evidence="3"/>
<dbReference type="EMBL" id="AK013275">
    <property type="protein sequence ID" value="BAB28763.1"/>
    <property type="status" value="ALT_INIT"/>
    <property type="molecule type" value="mRNA"/>
</dbReference>
<dbReference type="EMBL" id="AK037249">
    <property type="protein sequence ID" value="BAC29776.1"/>
    <property type="molecule type" value="mRNA"/>
</dbReference>
<dbReference type="EMBL" id="AK166813">
    <property type="protein sequence ID" value="BAE39040.1"/>
    <property type="molecule type" value="mRNA"/>
</dbReference>
<dbReference type="EMBL" id="AK167234">
    <property type="protein sequence ID" value="BAE39358.1"/>
    <property type="molecule type" value="mRNA"/>
</dbReference>
<dbReference type="EMBL" id="BC004823">
    <property type="protein sequence ID" value="AAH04823.2"/>
    <property type="molecule type" value="mRNA"/>
</dbReference>
<dbReference type="EMBL" id="BC012496">
    <property type="protein sequence ID" value="AAH12496.2"/>
    <property type="molecule type" value="mRNA"/>
</dbReference>
<dbReference type="EMBL" id="M35797">
    <property type="protein sequence ID" value="AAA76575.1"/>
    <property type="molecule type" value="mRNA"/>
</dbReference>
<dbReference type="CCDS" id="CCDS37437.1"/>
<dbReference type="PIR" id="A53174">
    <property type="entry name" value="A53174"/>
</dbReference>
<dbReference type="RefSeq" id="NP_033364.2">
    <property type="nucleotide sequence ID" value="NM_009338.3"/>
</dbReference>
<dbReference type="SMR" id="Q8CAY6"/>
<dbReference type="BioGRID" id="225610">
    <property type="interactions" value="5"/>
</dbReference>
<dbReference type="FunCoup" id="Q8CAY6">
    <property type="interactions" value="1643"/>
</dbReference>
<dbReference type="STRING" id="10090.ENSMUSP00000007005"/>
<dbReference type="GlyGen" id="Q8CAY6">
    <property type="glycosylation" value="2 sites, 1 O-linked glycan (1 site)"/>
</dbReference>
<dbReference type="iPTMnet" id="Q8CAY6"/>
<dbReference type="PhosphoSitePlus" id="Q8CAY6"/>
<dbReference type="SwissPalm" id="Q8CAY6"/>
<dbReference type="REPRODUCTION-2DPAGE" id="Q8CAY6"/>
<dbReference type="jPOST" id="Q8CAY6"/>
<dbReference type="PaxDb" id="10090-ENSMUSP00000007005"/>
<dbReference type="PeptideAtlas" id="Q8CAY6"/>
<dbReference type="ProteomicsDB" id="262810"/>
<dbReference type="Pumba" id="Q8CAY6"/>
<dbReference type="Ensembl" id="ENSMUST00000007005.14">
    <property type="protein sequence ID" value="ENSMUSP00000007005.8"/>
    <property type="gene ID" value="ENSMUSG00000023832.15"/>
</dbReference>
<dbReference type="GeneID" id="110460"/>
<dbReference type="KEGG" id="mmu:110460"/>
<dbReference type="UCSC" id="uc008alp.1">
    <property type="organism name" value="mouse"/>
</dbReference>
<dbReference type="AGR" id="MGI:87871"/>
<dbReference type="CTD" id="39"/>
<dbReference type="MGI" id="MGI:87871">
    <property type="gene designation" value="Acat2"/>
</dbReference>
<dbReference type="VEuPathDB" id="HostDB:ENSMUSG00000023832"/>
<dbReference type="eggNOG" id="KOG1390">
    <property type="taxonomic scope" value="Eukaryota"/>
</dbReference>
<dbReference type="GeneTree" id="ENSGT01030000234626"/>
<dbReference type="InParanoid" id="Q8CAY6"/>
<dbReference type="OMA" id="ICPSIAI"/>
<dbReference type="OrthoDB" id="5404651at2759"/>
<dbReference type="PhylomeDB" id="Q8CAY6"/>
<dbReference type="TreeFam" id="TF300650"/>
<dbReference type="Reactome" id="R-MMU-191273">
    <property type="pathway name" value="Cholesterol biosynthesis"/>
</dbReference>
<dbReference type="UniPathway" id="UPA00199"/>
<dbReference type="BioGRID-ORCS" id="110460">
    <property type="hits" value="4 hits in 77 CRISPR screens"/>
</dbReference>
<dbReference type="ChiTaRS" id="Acat2">
    <property type="organism name" value="mouse"/>
</dbReference>
<dbReference type="PRO" id="PR:Q8CAY6"/>
<dbReference type="Proteomes" id="UP000000589">
    <property type="component" value="Chromosome 17"/>
</dbReference>
<dbReference type="RNAct" id="Q8CAY6">
    <property type="molecule type" value="protein"/>
</dbReference>
<dbReference type="Bgee" id="ENSMUSG00000023832">
    <property type="expression patterns" value="Expressed in condyle and 295 other cell types or tissues"/>
</dbReference>
<dbReference type="ExpressionAtlas" id="Q8CAY6">
    <property type="expression patterns" value="baseline and differential"/>
</dbReference>
<dbReference type="GO" id="GO:0005829">
    <property type="term" value="C:cytosol"/>
    <property type="evidence" value="ECO:0007669"/>
    <property type="project" value="UniProtKB-SubCell"/>
</dbReference>
<dbReference type="GO" id="GO:0005739">
    <property type="term" value="C:mitochondrion"/>
    <property type="evidence" value="ECO:0007005"/>
    <property type="project" value="MGI"/>
</dbReference>
<dbReference type="GO" id="GO:0003985">
    <property type="term" value="F:acetyl-CoA C-acetyltransferase activity"/>
    <property type="evidence" value="ECO:0007669"/>
    <property type="project" value="UniProtKB-EC"/>
</dbReference>
<dbReference type="GO" id="GO:0006631">
    <property type="term" value="P:fatty acid metabolic process"/>
    <property type="evidence" value="ECO:0007669"/>
    <property type="project" value="UniProtKB-UniPathway"/>
</dbReference>
<dbReference type="GO" id="GO:0045797">
    <property type="term" value="P:positive regulation of intestinal cholesterol absorption"/>
    <property type="evidence" value="ECO:0000314"/>
    <property type="project" value="CACAO"/>
</dbReference>
<dbReference type="CDD" id="cd00751">
    <property type="entry name" value="thiolase"/>
    <property type="match status" value="1"/>
</dbReference>
<dbReference type="FunFam" id="3.40.47.10:FF:000010">
    <property type="entry name" value="Acetyl-CoA acetyltransferase (Thiolase)"/>
    <property type="match status" value="1"/>
</dbReference>
<dbReference type="Gene3D" id="3.40.47.10">
    <property type="match status" value="2"/>
</dbReference>
<dbReference type="InterPro" id="IPR002155">
    <property type="entry name" value="Thiolase"/>
</dbReference>
<dbReference type="InterPro" id="IPR016039">
    <property type="entry name" value="Thiolase-like"/>
</dbReference>
<dbReference type="InterPro" id="IPR020610">
    <property type="entry name" value="Thiolase_AS"/>
</dbReference>
<dbReference type="InterPro" id="IPR020617">
    <property type="entry name" value="Thiolase_C"/>
</dbReference>
<dbReference type="InterPro" id="IPR020613">
    <property type="entry name" value="Thiolase_CS"/>
</dbReference>
<dbReference type="InterPro" id="IPR020616">
    <property type="entry name" value="Thiolase_N"/>
</dbReference>
<dbReference type="NCBIfam" id="TIGR01930">
    <property type="entry name" value="AcCoA-C-Actrans"/>
    <property type="match status" value="1"/>
</dbReference>
<dbReference type="PANTHER" id="PTHR18919:SF107">
    <property type="entry name" value="ACETYL-COA ACETYLTRANSFERASE, CYTOSOLIC"/>
    <property type="match status" value="1"/>
</dbReference>
<dbReference type="PANTHER" id="PTHR18919">
    <property type="entry name" value="ACETYL-COA C-ACYLTRANSFERASE"/>
    <property type="match status" value="1"/>
</dbReference>
<dbReference type="Pfam" id="PF02803">
    <property type="entry name" value="Thiolase_C"/>
    <property type="match status" value="1"/>
</dbReference>
<dbReference type="Pfam" id="PF00108">
    <property type="entry name" value="Thiolase_N"/>
    <property type="match status" value="1"/>
</dbReference>
<dbReference type="PIRSF" id="PIRSF000429">
    <property type="entry name" value="Ac-CoA_Ac_transf"/>
    <property type="match status" value="1"/>
</dbReference>
<dbReference type="SUPFAM" id="SSF53901">
    <property type="entry name" value="Thiolase-like"/>
    <property type="match status" value="2"/>
</dbReference>
<dbReference type="PROSITE" id="PS00737">
    <property type="entry name" value="THIOLASE_2"/>
    <property type="match status" value="1"/>
</dbReference>
<dbReference type="PROSITE" id="PS00099">
    <property type="entry name" value="THIOLASE_3"/>
    <property type="match status" value="1"/>
</dbReference>
<feature type="chain" id="PRO_0000206410" description="Acetyl-CoA acetyltransferase, cytosolic">
    <location>
        <begin position="1"/>
        <end position="397"/>
    </location>
</feature>
<feature type="active site" description="Acyl-thioester intermediate" evidence="2">
    <location>
        <position position="92"/>
    </location>
</feature>
<feature type="active site" description="Proton donor/acceptor" evidence="2">
    <location>
        <position position="383"/>
    </location>
</feature>
<feature type="binding site" evidence="2">
    <location>
        <position position="223"/>
    </location>
    <ligand>
        <name>CoA</name>
        <dbReference type="ChEBI" id="CHEBI:57287"/>
    </ligand>
</feature>
<feature type="binding site" evidence="2">
    <location>
        <position position="226"/>
    </location>
    <ligand>
        <name>CoA</name>
        <dbReference type="ChEBI" id="CHEBI:57287"/>
    </ligand>
</feature>
<feature type="binding site" evidence="2">
    <location>
        <position position="252"/>
    </location>
    <ligand>
        <name>CoA</name>
        <dbReference type="ChEBI" id="CHEBI:57287"/>
    </ligand>
</feature>
<feature type="site" description="Increases nucleophilicity of active site Cys" evidence="1">
    <location>
        <position position="353"/>
    </location>
</feature>
<feature type="modified residue" description="N-acetylmethionine" evidence="2">
    <location>
        <position position="1"/>
    </location>
</feature>
<feature type="modified residue" description="N6-acetyllysine" evidence="2">
    <location>
        <position position="200"/>
    </location>
</feature>
<feature type="modified residue" description="N6-acetyllysine" evidence="2">
    <location>
        <position position="233"/>
    </location>
</feature>
<feature type="modified residue" description="N6-acetyllysine" evidence="2">
    <location>
        <position position="235"/>
    </location>
</feature>
<feature type="sequence conflict" description="In Ref. 2; AAH12496." evidence="4" ref="2">
    <original>I</original>
    <variation>L</variation>
    <location>
        <position position="106"/>
    </location>
</feature>
<feature type="sequence conflict" description="In Ref. 3." evidence="4" ref="3">
    <original>VAGGM</original>
    <variation>CLTGK</variation>
    <location>
        <begin position="115"/>
        <end position="119"/>
    </location>
</feature>
<feature type="sequence conflict" description="In Ref. 3; AAA76575." evidence="4" ref="3">
    <original>A</original>
    <variation>P</variation>
    <location>
        <position position="125"/>
    </location>
</feature>
<feature type="sequence conflict" description="In Ref. 3; AAA76575." evidence="4" ref="3">
    <original>H</original>
    <variation>T</variation>
    <location>
        <position position="191"/>
    </location>
</feature>
<feature type="sequence conflict" description="In Ref. 1; BAB28763." evidence="4" ref="1">
    <original>A</original>
    <variation>D</variation>
    <location>
        <position position="230"/>
    </location>
</feature>
<feature type="sequence conflict" description="In Ref. 3; AAA76575." evidence="4" ref="3">
    <original>K</original>
    <variation>T</variation>
    <location>
        <position position="233"/>
    </location>
</feature>
<feature type="sequence conflict" description="In Ref. 1; BAB28763." evidence="4" ref="1">
    <original>V</original>
    <variation>L</variation>
    <location>
        <position position="262"/>
    </location>
</feature>
<feature type="sequence conflict" description="In Ref. 1; BAC29776." evidence="4" ref="1">
    <original>K</original>
    <variation>E</variation>
    <location>
        <position position="266"/>
    </location>
</feature>
<feature type="sequence conflict" description="In Ref. 3; AAA76575." evidence="4" ref="3">
    <original>E</original>
    <variation>G</variation>
    <location>
        <position position="340"/>
    </location>
</feature>
<reference key="1">
    <citation type="journal article" date="2005" name="Science">
        <title>The transcriptional landscape of the mammalian genome.</title>
        <authorList>
            <person name="Carninci P."/>
            <person name="Kasukawa T."/>
            <person name="Katayama S."/>
            <person name="Gough J."/>
            <person name="Frith M.C."/>
            <person name="Maeda N."/>
            <person name="Oyama R."/>
            <person name="Ravasi T."/>
            <person name="Lenhard B."/>
            <person name="Wells C."/>
            <person name="Kodzius R."/>
            <person name="Shimokawa K."/>
            <person name="Bajic V.B."/>
            <person name="Brenner S.E."/>
            <person name="Batalov S."/>
            <person name="Forrest A.R."/>
            <person name="Zavolan M."/>
            <person name="Davis M.J."/>
            <person name="Wilming L.G."/>
            <person name="Aidinis V."/>
            <person name="Allen J.E."/>
            <person name="Ambesi-Impiombato A."/>
            <person name="Apweiler R."/>
            <person name="Aturaliya R.N."/>
            <person name="Bailey T.L."/>
            <person name="Bansal M."/>
            <person name="Baxter L."/>
            <person name="Beisel K.W."/>
            <person name="Bersano T."/>
            <person name="Bono H."/>
            <person name="Chalk A.M."/>
            <person name="Chiu K.P."/>
            <person name="Choudhary V."/>
            <person name="Christoffels A."/>
            <person name="Clutterbuck D.R."/>
            <person name="Crowe M.L."/>
            <person name="Dalla E."/>
            <person name="Dalrymple B.P."/>
            <person name="de Bono B."/>
            <person name="Della Gatta G."/>
            <person name="di Bernardo D."/>
            <person name="Down T."/>
            <person name="Engstrom P."/>
            <person name="Fagiolini M."/>
            <person name="Faulkner G."/>
            <person name="Fletcher C.F."/>
            <person name="Fukushima T."/>
            <person name="Furuno M."/>
            <person name="Futaki S."/>
            <person name="Gariboldi M."/>
            <person name="Georgii-Hemming P."/>
            <person name="Gingeras T.R."/>
            <person name="Gojobori T."/>
            <person name="Green R.E."/>
            <person name="Gustincich S."/>
            <person name="Harbers M."/>
            <person name="Hayashi Y."/>
            <person name="Hensch T.K."/>
            <person name="Hirokawa N."/>
            <person name="Hill D."/>
            <person name="Huminiecki L."/>
            <person name="Iacono M."/>
            <person name="Ikeo K."/>
            <person name="Iwama A."/>
            <person name="Ishikawa T."/>
            <person name="Jakt M."/>
            <person name="Kanapin A."/>
            <person name="Katoh M."/>
            <person name="Kawasawa Y."/>
            <person name="Kelso J."/>
            <person name="Kitamura H."/>
            <person name="Kitano H."/>
            <person name="Kollias G."/>
            <person name="Krishnan S.P."/>
            <person name="Kruger A."/>
            <person name="Kummerfeld S.K."/>
            <person name="Kurochkin I.V."/>
            <person name="Lareau L.F."/>
            <person name="Lazarevic D."/>
            <person name="Lipovich L."/>
            <person name="Liu J."/>
            <person name="Liuni S."/>
            <person name="McWilliam S."/>
            <person name="Madan Babu M."/>
            <person name="Madera M."/>
            <person name="Marchionni L."/>
            <person name="Matsuda H."/>
            <person name="Matsuzawa S."/>
            <person name="Miki H."/>
            <person name="Mignone F."/>
            <person name="Miyake S."/>
            <person name="Morris K."/>
            <person name="Mottagui-Tabar S."/>
            <person name="Mulder N."/>
            <person name="Nakano N."/>
            <person name="Nakauchi H."/>
            <person name="Ng P."/>
            <person name="Nilsson R."/>
            <person name="Nishiguchi S."/>
            <person name="Nishikawa S."/>
            <person name="Nori F."/>
            <person name="Ohara O."/>
            <person name="Okazaki Y."/>
            <person name="Orlando V."/>
            <person name="Pang K.C."/>
            <person name="Pavan W.J."/>
            <person name="Pavesi G."/>
            <person name="Pesole G."/>
            <person name="Petrovsky N."/>
            <person name="Piazza S."/>
            <person name="Reed J."/>
            <person name="Reid J.F."/>
            <person name="Ring B.Z."/>
            <person name="Ringwald M."/>
            <person name="Rost B."/>
            <person name="Ruan Y."/>
            <person name="Salzberg S.L."/>
            <person name="Sandelin A."/>
            <person name="Schneider C."/>
            <person name="Schoenbach C."/>
            <person name="Sekiguchi K."/>
            <person name="Semple C.A."/>
            <person name="Seno S."/>
            <person name="Sessa L."/>
            <person name="Sheng Y."/>
            <person name="Shibata Y."/>
            <person name="Shimada H."/>
            <person name="Shimada K."/>
            <person name="Silva D."/>
            <person name="Sinclair B."/>
            <person name="Sperling S."/>
            <person name="Stupka E."/>
            <person name="Sugiura K."/>
            <person name="Sultana R."/>
            <person name="Takenaka Y."/>
            <person name="Taki K."/>
            <person name="Tammoja K."/>
            <person name="Tan S.L."/>
            <person name="Tang S."/>
            <person name="Taylor M.S."/>
            <person name="Tegner J."/>
            <person name="Teichmann S.A."/>
            <person name="Ueda H.R."/>
            <person name="van Nimwegen E."/>
            <person name="Verardo R."/>
            <person name="Wei C.L."/>
            <person name="Yagi K."/>
            <person name="Yamanishi H."/>
            <person name="Zabarovsky E."/>
            <person name="Zhu S."/>
            <person name="Zimmer A."/>
            <person name="Hide W."/>
            <person name="Bult C."/>
            <person name="Grimmond S.M."/>
            <person name="Teasdale R.D."/>
            <person name="Liu E.T."/>
            <person name="Brusic V."/>
            <person name="Quackenbush J."/>
            <person name="Wahlestedt C."/>
            <person name="Mattick J.S."/>
            <person name="Hume D.A."/>
            <person name="Kai C."/>
            <person name="Sasaki D."/>
            <person name="Tomaru Y."/>
            <person name="Fukuda S."/>
            <person name="Kanamori-Katayama M."/>
            <person name="Suzuki M."/>
            <person name="Aoki J."/>
            <person name="Arakawa T."/>
            <person name="Iida J."/>
            <person name="Imamura K."/>
            <person name="Itoh M."/>
            <person name="Kato T."/>
            <person name="Kawaji H."/>
            <person name="Kawagashira N."/>
            <person name="Kawashima T."/>
            <person name="Kojima M."/>
            <person name="Kondo S."/>
            <person name="Konno H."/>
            <person name="Nakano K."/>
            <person name="Ninomiya N."/>
            <person name="Nishio T."/>
            <person name="Okada M."/>
            <person name="Plessy C."/>
            <person name="Shibata K."/>
            <person name="Shiraki T."/>
            <person name="Suzuki S."/>
            <person name="Tagami M."/>
            <person name="Waki K."/>
            <person name="Watahiki A."/>
            <person name="Okamura-Oho Y."/>
            <person name="Suzuki H."/>
            <person name="Kawai J."/>
            <person name="Hayashizaki Y."/>
        </authorList>
    </citation>
    <scope>NUCLEOTIDE SEQUENCE [LARGE SCALE MRNA]</scope>
    <source>
        <strain>C57BL/6J</strain>
        <tissue>Blastocyst</tissue>
        <tissue>Embryo</tissue>
        <tissue>Skin</tissue>
    </source>
</reference>
<reference key="2">
    <citation type="journal article" date="2004" name="Genome Res.">
        <title>The status, quality, and expansion of the NIH full-length cDNA project: the Mammalian Gene Collection (MGC).</title>
        <authorList>
            <consortium name="The MGC Project Team"/>
        </authorList>
    </citation>
    <scope>NUCLEOTIDE SEQUENCE [LARGE SCALE MRNA]</scope>
    <source>
        <strain>C57BL/6J</strain>
        <strain>FVB/N</strain>
        <tissue>Mammary gland</tissue>
        <tissue>Retina</tissue>
    </source>
</reference>
<reference key="3">
    <citation type="journal article" date="1991" name="Genet. Res.">
        <title>Isolation and characterization of a cDNA clone corresponding to the mouse T-complex gene Tcp-1x.</title>
        <authorList>
            <person name="Dudley K."/>
            <person name="Shanahan F."/>
            <person name="Burtenshaw M."/>
            <person name="Evans E.P."/>
            <person name="Ruddy S."/>
            <person name="Lyon M.F."/>
        </authorList>
    </citation>
    <scope>NUCLEOTIDE SEQUENCE [MRNA] OF 115-397</scope>
    <source>
        <strain>C57BL/6J</strain>
    </source>
</reference>
<reference key="4">
    <citation type="submission" date="2009-01" db="UniProtKB">
        <authorList>
            <person name="Lubec G."/>
            <person name="Sunyer B."/>
            <person name="Chen W.-Q."/>
        </authorList>
    </citation>
    <scope>PROTEIN SEQUENCE OF 342-372</scope>
    <scope>IDENTIFICATION BY MASS SPECTROMETRY</scope>
    <source>
        <strain>OF1</strain>
        <tissue>Hippocampus</tissue>
    </source>
</reference>
<reference key="5">
    <citation type="journal article" date="2010" name="Cell">
        <title>A tissue-specific atlas of mouse protein phosphorylation and expression.</title>
        <authorList>
            <person name="Huttlin E.L."/>
            <person name="Jedrychowski M.P."/>
            <person name="Elias J.E."/>
            <person name="Goswami T."/>
            <person name="Rad R."/>
            <person name="Beausoleil S.A."/>
            <person name="Villen J."/>
            <person name="Haas W."/>
            <person name="Sowa M.E."/>
            <person name="Gygi S.P."/>
        </authorList>
    </citation>
    <scope>IDENTIFICATION BY MASS SPECTROMETRY [LARGE SCALE ANALYSIS]</scope>
    <source>
        <tissue>Brain</tissue>
        <tissue>Brown adipose tissue</tissue>
        <tissue>Heart</tissue>
        <tissue>Kidney</tissue>
        <tissue>Liver</tissue>
        <tissue>Lung</tissue>
        <tissue>Pancreas</tissue>
        <tissue>Spleen</tissue>
        <tissue>Testis</tissue>
    </source>
</reference>
<gene>
    <name type="primary">Acat2</name>
</gene>
<organism>
    <name type="scientific">Mus musculus</name>
    <name type="common">Mouse</name>
    <dbReference type="NCBI Taxonomy" id="10090"/>
    <lineage>
        <taxon>Eukaryota</taxon>
        <taxon>Metazoa</taxon>
        <taxon>Chordata</taxon>
        <taxon>Craniata</taxon>
        <taxon>Vertebrata</taxon>
        <taxon>Euteleostomi</taxon>
        <taxon>Mammalia</taxon>
        <taxon>Eutheria</taxon>
        <taxon>Euarchontoglires</taxon>
        <taxon>Glires</taxon>
        <taxon>Rodentia</taxon>
        <taxon>Myomorpha</taxon>
        <taxon>Muroidea</taxon>
        <taxon>Muridae</taxon>
        <taxon>Murinae</taxon>
        <taxon>Mus</taxon>
        <taxon>Mus</taxon>
    </lineage>
</organism>
<sequence>MNAGSDPVVIVSAARTAIGSFNGALSTVPVHEMGTTVIKEVLQRAKVAPEEVSEVIFGHVLTAGCGQNPTRQASVGAGIPYSVPAWSCQMICGSGLKAVCLAAQSIAMGDSTIVVAGGMENMSKAPHLTHLRTGVRMGEVPLADSILCDGLTDAFHNYHMGITAENVAKKWQVSREAQDKVAVLSQNRAEHAQKAGHFDKEIVPVLVSSRKGLTEVKIDEFPRHGSNLEAMGKLKPYFLTDGTGTVTPANASGMNDGAAAVVLMKKTEAERRMLKPLARIVSWSQAGVEPSVMGVGPIPAIKQAVAKAGWSLEDVDLFEINEAFAAVSAAIAKELGLNPEKVNIDGGAIALGHPLGASGCRILVTLLHTLERVGGTRGVAALCIGGGMGVAMCVQRG</sequence>
<protein>
    <recommendedName>
        <fullName>Acetyl-CoA acetyltransferase, cytosolic</fullName>
        <ecNumber evidence="3">2.3.1.9</ecNumber>
    </recommendedName>
    <alternativeName>
        <fullName>Cytosolic acetoacetyl-CoA thiolase</fullName>
    </alternativeName>
</protein>
<name>THIC_MOUSE</name>